<feature type="chain" id="PRO_0000363751" description="O-phosphoserine--tRNA(Cys) ligase">
    <location>
        <begin position="1"/>
        <end position="537"/>
    </location>
</feature>
<feature type="binding site" evidence="1">
    <location>
        <begin position="186"/>
        <end position="188"/>
    </location>
    <ligand>
        <name>substrate</name>
    </ligand>
</feature>
<feature type="binding site" evidence="1">
    <location>
        <begin position="231"/>
        <end position="233"/>
    </location>
    <ligand>
        <name>substrate</name>
    </ligand>
</feature>
<feature type="binding site" evidence="1">
    <location>
        <begin position="273"/>
        <end position="274"/>
    </location>
    <ligand>
        <name>substrate</name>
    </ligand>
</feature>
<feature type="binding site" evidence="1">
    <location>
        <position position="317"/>
    </location>
    <ligand>
        <name>substrate</name>
    </ligand>
</feature>
<name>SEPS_METM5</name>
<protein>
    <recommendedName>
        <fullName evidence="1">O-phosphoserine--tRNA(Cys) ligase</fullName>
        <shortName evidence="1">O-phosphoserine--tRNA ligase</shortName>
        <ecNumber evidence="1">6.1.1.27</ecNumber>
    </recommendedName>
    <alternativeName>
        <fullName evidence="1">Non-canonical O-phosphoseryl-tRNA(Cys) synthetase</fullName>
    </alternativeName>
    <alternativeName>
        <fullName evidence="1">O-phosphoseryl-tRNA(Cys) synthetase</fullName>
        <shortName evidence="1">SepRS</shortName>
    </alternativeName>
</protein>
<organism>
    <name type="scientific">Methanococcus maripaludis (strain C5 / ATCC BAA-1333)</name>
    <dbReference type="NCBI Taxonomy" id="402880"/>
    <lineage>
        <taxon>Archaea</taxon>
        <taxon>Methanobacteriati</taxon>
        <taxon>Methanobacteriota</taxon>
        <taxon>Methanomada group</taxon>
        <taxon>Methanococci</taxon>
        <taxon>Methanococcales</taxon>
        <taxon>Methanococcaceae</taxon>
        <taxon>Methanococcus</taxon>
    </lineage>
</organism>
<keyword id="KW-0030">Aminoacyl-tRNA synthetase</keyword>
<keyword id="KW-0067">ATP-binding</keyword>
<keyword id="KW-0436">Ligase</keyword>
<keyword id="KW-0547">Nucleotide-binding</keyword>
<keyword id="KW-0648">Protein biosynthesis</keyword>
<comment type="function">
    <text evidence="1">Catalyzes the attachment of O-phosphoserine (Sep) to tRNA(Cys).</text>
</comment>
<comment type="catalytic activity">
    <reaction evidence="1">
        <text>tRNA(Cys) + O-phospho-L-serine + ATP = O-phospho-L-seryl-tRNA(Cys) + AMP + diphosphate</text>
        <dbReference type="Rhea" id="RHEA:25678"/>
        <dbReference type="Rhea" id="RHEA-COMP:9661"/>
        <dbReference type="Rhea" id="RHEA-COMP:9719"/>
        <dbReference type="ChEBI" id="CHEBI:30616"/>
        <dbReference type="ChEBI" id="CHEBI:33019"/>
        <dbReference type="ChEBI" id="CHEBI:57524"/>
        <dbReference type="ChEBI" id="CHEBI:78442"/>
        <dbReference type="ChEBI" id="CHEBI:78551"/>
        <dbReference type="ChEBI" id="CHEBI:456215"/>
        <dbReference type="EC" id="6.1.1.27"/>
    </reaction>
</comment>
<comment type="subunit">
    <text evidence="1">Homotetramer. Interacts with SepCysS.</text>
</comment>
<comment type="similarity">
    <text evidence="1">Belongs to the class-II aminoacyl-tRNA synthetase family. O-phosphoseryl-tRNA(Cys) synthetase subfamily.</text>
</comment>
<evidence type="ECO:0000255" key="1">
    <source>
        <dbReference type="HAMAP-Rule" id="MF_01674"/>
    </source>
</evidence>
<gene>
    <name evidence="1" type="primary">sepS</name>
    <name type="ordered locus">MmarC5_0888</name>
</gene>
<proteinExistence type="inferred from homology"/>
<reference key="1">
    <citation type="submission" date="2007-03" db="EMBL/GenBank/DDBJ databases">
        <title>Complete sequence of chromosome of Methanococcus maripaludis C5.</title>
        <authorList>
            <consortium name="US DOE Joint Genome Institute"/>
            <person name="Copeland A."/>
            <person name="Lucas S."/>
            <person name="Lapidus A."/>
            <person name="Barry K."/>
            <person name="Glavina del Rio T."/>
            <person name="Dalin E."/>
            <person name="Tice H."/>
            <person name="Pitluck S."/>
            <person name="Chertkov O."/>
            <person name="Brettin T."/>
            <person name="Bruce D."/>
            <person name="Han C."/>
            <person name="Detter J.C."/>
            <person name="Schmutz J."/>
            <person name="Larimer F."/>
            <person name="Land M."/>
            <person name="Hauser L."/>
            <person name="Kyrpides N."/>
            <person name="Mikhailova N."/>
            <person name="Sieprawska-Lupa M."/>
            <person name="Whitman W.B."/>
            <person name="Richardson P."/>
        </authorList>
    </citation>
    <scope>NUCLEOTIDE SEQUENCE [LARGE SCALE GENOMIC DNA]</scope>
    <source>
        <strain>C5 / ATCC BAA-1333</strain>
    </source>
</reference>
<dbReference type="EC" id="6.1.1.27" evidence="1"/>
<dbReference type="EMBL" id="CP000609">
    <property type="protein sequence ID" value="ABO35195.1"/>
    <property type="molecule type" value="Genomic_DNA"/>
</dbReference>
<dbReference type="RefSeq" id="WP_011868649.1">
    <property type="nucleotide sequence ID" value="NC_009135.1"/>
</dbReference>
<dbReference type="SMR" id="A4FYB1"/>
<dbReference type="STRING" id="402880.MmarC5_0888"/>
<dbReference type="GeneID" id="4928609"/>
<dbReference type="KEGG" id="mmq:MmarC5_0888"/>
<dbReference type="eggNOG" id="arCOG00411">
    <property type="taxonomic scope" value="Archaea"/>
</dbReference>
<dbReference type="HOGENOM" id="CLU_506822_0_0_2"/>
<dbReference type="OrthoDB" id="145125at2157"/>
<dbReference type="Proteomes" id="UP000000253">
    <property type="component" value="Chromosome"/>
</dbReference>
<dbReference type="GO" id="GO:0005524">
    <property type="term" value="F:ATP binding"/>
    <property type="evidence" value="ECO:0007669"/>
    <property type="project" value="UniProtKB-UniRule"/>
</dbReference>
<dbReference type="GO" id="GO:0043816">
    <property type="term" value="F:phosphoserine-tRNA(Cys) ligase activity"/>
    <property type="evidence" value="ECO:0007669"/>
    <property type="project" value="UniProtKB-EC"/>
</dbReference>
<dbReference type="GO" id="GO:0000049">
    <property type="term" value="F:tRNA binding"/>
    <property type="evidence" value="ECO:0007669"/>
    <property type="project" value="InterPro"/>
</dbReference>
<dbReference type="GO" id="GO:0006412">
    <property type="term" value="P:translation"/>
    <property type="evidence" value="ECO:0007669"/>
    <property type="project" value="UniProtKB-KW"/>
</dbReference>
<dbReference type="GO" id="GO:0043039">
    <property type="term" value="P:tRNA aminoacylation"/>
    <property type="evidence" value="ECO:0007669"/>
    <property type="project" value="UniProtKB-UniRule"/>
</dbReference>
<dbReference type="Gene3D" id="6.10.250.3340">
    <property type="match status" value="3"/>
</dbReference>
<dbReference type="Gene3D" id="6.20.250.20">
    <property type="match status" value="1"/>
</dbReference>
<dbReference type="Gene3D" id="3.30.930.10">
    <property type="entry name" value="Bira Bifunctional Protein, Domain 2"/>
    <property type="match status" value="1"/>
</dbReference>
<dbReference type="HAMAP" id="MF_01674">
    <property type="entry name" value="Sep_tRNA_synth"/>
    <property type="match status" value="1"/>
</dbReference>
<dbReference type="InterPro" id="IPR006195">
    <property type="entry name" value="aa-tRNA-synth_II"/>
</dbReference>
<dbReference type="InterPro" id="IPR045864">
    <property type="entry name" value="aa-tRNA-synth_II/BPL/LPL"/>
</dbReference>
<dbReference type="InterPro" id="IPR005246">
    <property type="entry name" value="O-Pseryl-tRNA(Cys)_ligase"/>
</dbReference>
<dbReference type="InterPro" id="IPR002319">
    <property type="entry name" value="Phenylalanyl-tRNA_Synthase"/>
</dbReference>
<dbReference type="InterPro" id="IPR041590">
    <property type="entry name" value="SepRS_C"/>
</dbReference>
<dbReference type="NCBIfam" id="TIGR00470">
    <property type="entry name" value="sepS"/>
    <property type="match status" value="1"/>
</dbReference>
<dbReference type="Pfam" id="PF18006">
    <property type="entry name" value="SepRS_C"/>
    <property type="match status" value="1"/>
</dbReference>
<dbReference type="Pfam" id="PF01409">
    <property type="entry name" value="tRNA-synt_2d"/>
    <property type="match status" value="1"/>
</dbReference>
<dbReference type="SUPFAM" id="SSF55681">
    <property type="entry name" value="Class II aaRS and biotin synthetases"/>
    <property type="match status" value="1"/>
</dbReference>
<dbReference type="PROSITE" id="PS50862">
    <property type="entry name" value="AA_TRNA_LIGASE_II"/>
    <property type="match status" value="1"/>
</dbReference>
<accession>A4FYB1</accession>
<sequence>MFKREEIIEMANKDFEKAWIETKDLIKAKKVNESYPRIKPAFGKTHPVNDTIENLRQAYLRMGFEEYINPVIVDERDIYKQFGPEAMAVLDRCFYLAGLPRPDVGLSDEKISQIEKLGIKVSEHKESLQKILHGYKKGTLDGDDLVLEISNALEISSEMGLKILEEVFPEFKDLTAVSSKLTLRSHMTSGWFLTVSDLMNKKPLPFKLFSIDRCFRREQKEDKSHLMTYHSASCAIAGEGVDINDGKAIAEGLLSQFGFTNFKFIPDEKKSKYYTPETQTEVYAYHPKLKEWLEVATFGVYSPVALSKYGIDVPVMNLGLGVERLAMISGNFADVREMVYPQFYEHKLSDRAVASMVKLDKVPVMDEIYDLTKELIDSCVKNKDLKSPCELTIEKTFSFGKTKKNVKINIFEKEEGKNLLGPSILNEIYVYDGNVIGIPESFDGVKEEFKDFLEKGKAEGVPTGIRYIDALCFKITSKLEEAFVSNTTEFKVKVPIVRSLSDINLKIDDIALKQIMSKTKVIDVRGPVFLNVEVKIE</sequence>